<sequence>MSLLGTINPNINPERTVAGRGTQEEEGEIARVEHNHHNNAASVSTDETVLERSKEIGDEDVAVEEVTRLARQLTRQSTRFSTSGNVENPFLETKEDSTLNPLSPNFKAKNWMKNLLALSSRDPERYPKRVAGVAFKNLSVHGYGSPTDYQKDVFNSVLEVGTLVRRIMGTGKQKIQILRDFDGLVKSGEMLVVLGRPGSGCSTFLKTISGEMNGIYMDEKSYLNYQGISSKQMRKQFRGEAIYTAETDVHFPQLTVGDTLKFAALARAPRNRLPGVSREQYAVHMRDVVMAMLGLTHTMNTRVGNDFVRGVSGGERKRVSIAEATLSGSPLQCWDNSTRGLDSANALEFCKTLNLMTKYAGATVAVAIYQASQSAYDVFDKVTVLYEGRQIYFGRTDEAKEFFTNMGFECPERQTTADFLTSLTSPAERVVKPGFEGKVPQTPDEFVRAWKSSEAYAKLMREIEEYDREFPIGGESLNQFIESRRAMQAKNQRVKSPYTISVWQQIELCMIRGFQRLKGDSSLTMSQLIGNFIMALVIGSVFYNLPDDTSSFYARGALLFFAVLLNAFSSALEILTLYAQRPIVEKQARYAMYHPFAEAIASMLCDMPYKITNAIIFNLTLYFMTNLRREPGAFFVFLLFSFVTTLTMSMLFRTMAASSRTLSQALVPAAILILGLVIYTGFTIPTRNMLGWSRWMNYIDPIAYGFESLMVNEFHNRQFLCPDSAFVPSSGAYDSQPLAYRVCSTVGSVSGSRYVQGDDYLNQSFQYYKSHQWRNLGIMFGFMFFFMFTYLTATEYISESKSKGEVLLFRRGHAQPTGSHDVEKSPEVSSAAKTDEASSKEATGAIQRQEAIFQWKDVCYDIKIKGEPRRILDHVDGWVKPGTCTALMGVSGAGKTTLLDVLATRVTMGVVSGEMLVDGRPRDQSFQRKTGYVQQQDLHLHTTTVREALRFSALLRQPAHVPRQEKIDYVEEVIKLLGMESYADAVVGVPGEGLNVEQRKRLTIGVELAAKPQLLLFLDEPTSGLDSQTSWSILDLIDTLTKHGQAILCTIHQPSAMLFQRFDRLLFLAKGGKTVYFGEIGEKSSTLASYFERNGAPKLPPDANPAEWMLEVIGAAPGSHSDIDWPAVWRDSPERRAVHEHLDELKRTLSQKPIDPSKADPGSYDEFAAPFTIQLWECLLRVFSQYWRTPVYIYSKTALCVLTALYIGFSFFNAQNSAQGLQNQMFSIFMLMTIFGNLVQQIMPNFCTQRSLYEVRERPSKTYSWKAFMAANIIVELPWNTLMAFLIFVCWYYPIGLYRNAEPTDSVHERGALMFLLIWSFLLFTSTFAHMMIAGIELAETGGNLANLLFSLCLIFCGVLAPPQSLPGFWIFMYRVSPFTYLVSAMLSTGVSGTNAVCEPVEFLHFDPPSNMTCKDYMADYISTRGGYLENPSATSDCTFCTISSTDTFLSAVSSHYSDAWRNFGIMWAYIIFNIFAAVFIYWLARVPKGKRTKGST</sequence>
<comment type="function">
    <text evidence="6 7 8 10 11 18">Pleiotropic ABC efflux transporter that shows a strong substrate specificity for the azole class of drugs such as lotrimazole (CLT), fluconazole (FLC), itraconazole (ITC), ketoconazole (KTC), posaconazole (POS), tebuconazole (TEBZ), and voriconazole (VRC) (Probable) (PubMed:22509997, PubMed:23580559, PubMed:24123268, PubMed:28264842, PubMed:32209680). Is also able to transport rhodamine 6G (R-6G), a known substrate for many ABC transporters (PubMed:32209680). Required for normal pathogenesis in a Galleria mellonella (greater wax moth) infection model (PubMed:24123268).</text>
</comment>
<comment type="catalytic activity">
    <reaction evidence="11">
        <text>fluconazole(in) + ATP + H2O = fluconazole(out) + ADP + phosphate + H(+)</text>
        <dbReference type="Rhea" id="RHEA:61916"/>
        <dbReference type="ChEBI" id="CHEBI:15377"/>
        <dbReference type="ChEBI" id="CHEBI:15378"/>
        <dbReference type="ChEBI" id="CHEBI:30616"/>
        <dbReference type="ChEBI" id="CHEBI:43474"/>
        <dbReference type="ChEBI" id="CHEBI:46081"/>
        <dbReference type="ChEBI" id="CHEBI:456216"/>
    </reaction>
    <physiologicalReaction direction="left-to-right" evidence="11">
        <dbReference type="Rhea" id="RHEA:61917"/>
    </physiologicalReaction>
</comment>
<comment type="catalytic activity">
    <reaction evidence="8 11">
        <text>itraconazole(in) + ATP + H2O = itraconazole(out) + ADP + phosphate + H(+)</text>
        <dbReference type="Rhea" id="RHEA:33503"/>
        <dbReference type="ChEBI" id="CHEBI:6076"/>
        <dbReference type="ChEBI" id="CHEBI:15377"/>
        <dbReference type="ChEBI" id="CHEBI:15378"/>
        <dbReference type="ChEBI" id="CHEBI:30616"/>
        <dbReference type="ChEBI" id="CHEBI:43474"/>
        <dbReference type="ChEBI" id="CHEBI:456216"/>
    </reaction>
    <physiologicalReaction direction="left-to-right" evidence="8 11">
        <dbReference type="Rhea" id="RHEA:33504"/>
    </physiologicalReaction>
</comment>
<comment type="catalytic activity">
    <reaction evidence="8 11">
        <text>voriconazole(in) + ATP + H2O = voriconazole(out) + ADP + phosphate + H(+)</text>
        <dbReference type="Rhea" id="RHEA:61912"/>
        <dbReference type="ChEBI" id="CHEBI:10023"/>
        <dbReference type="ChEBI" id="CHEBI:15377"/>
        <dbReference type="ChEBI" id="CHEBI:15378"/>
        <dbReference type="ChEBI" id="CHEBI:30616"/>
        <dbReference type="ChEBI" id="CHEBI:43474"/>
        <dbReference type="ChEBI" id="CHEBI:456216"/>
    </reaction>
    <physiologicalReaction direction="left-to-right" evidence="8 11">
        <dbReference type="Rhea" id="RHEA:61913"/>
    </physiologicalReaction>
</comment>
<comment type="activity regulation">
    <text evidence="11">The efflux inhibitor FK506 impairs the transport activity.</text>
</comment>
<comment type="subcellular location">
    <subcellularLocation>
        <location evidence="8">Cell membrane</location>
        <topology evidence="1">Multi-pass membrane protein</topology>
    </subcellularLocation>
</comment>
<comment type="induction">
    <text evidence="5 7 8 9 11">Expression is positively regulated by the atrR transcription factor (PubMed:28052140). Expression is induced upon voriconazole treatment (PubMed:16622700, PubMed:24123268). Expression is increased in clinical azole-resistant isolates (PubMed:23580559, PubMed:32209680). In particular F20140, F18304 and F18454 show over 25-fold greater basal expression levels, whereas F19980 (7.2-fold), F20063 (6.5-fold), F20451 (3.6-fold), F18454 (5.1-fold) and F15483 (2.1-fold) also show significantly raised levels of basal expression (PubMed:23580559).</text>
</comment>
<comment type="disruption phenotype">
    <text evidence="6 7 8 10">Leads to decreased azole resistance, including itraconazole, posaconazole and voriconazole.</text>
</comment>
<comment type="similarity">
    <text evidence="17">Belongs to the ABC transporter superfamily. ABCG family. PDR (TC 3.A.1.205) subfamily.</text>
</comment>
<reference key="1">
    <citation type="journal article" date="2004" name="Fungal Genet. Biol.">
        <title>Insight into the genome of Aspergillus fumigatus: analysis of a 922 kb region encompassing the nitrate assimilation gene cluster.</title>
        <authorList>
            <person name="Pain A."/>
            <person name="Woodward J.R."/>
            <person name="Quail M.A."/>
            <person name="Anderson M.J."/>
            <person name="Clark R."/>
            <person name="Collins M."/>
            <person name="Fosker N."/>
            <person name="Fraser A."/>
            <person name="Harris D.E."/>
            <person name="Larke N."/>
            <person name="Murphy L.D."/>
            <person name="Humphray S."/>
            <person name="O'Neil S."/>
            <person name="Pertea M."/>
            <person name="Price C."/>
            <person name="Rabbinowitsch E."/>
            <person name="Rajandream M.A."/>
            <person name="Salzberg S.L."/>
            <person name="Saunders D."/>
            <person name="Seeger K."/>
            <person name="Sharp S."/>
            <person name="Warren T."/>
            <person name="Denning D.W."/>
            <person name="Barrell B.G."/>
            <person name="Hall N."/>
        </authorList>
    </citation>
    <scope>NUCLEOTIDE SEQUENCE [GENOMIC DNA]</scope>
    <source>
        <strain>ATCC MYA-4609 / CBS 101355 / FGSC A1100 / Af293</strain>
    </source>
</reference>
<reference key="2">
    <citation type="journal article" date="2005" name="Nature">
        <title>Genomic sequence of the pathogenic and allergenic filamentous fungus Aspergillus fumigatus.</title>
        <authorList>
            <person name="Nierman W.C."/>
            <person name="Pain A."/>
            <person name="Anderson M.J."/>
            <person name="Wortman J.R."/>
            <person name="Kim H.S."/>
            <person name="Arroyo J."/>
            <person name="Berriman M."/>
            <person name="Abe K."/>
            <person name="Archer D.B."/>
            <person name="Bermejo C."/>
            <person name="Bennett J.W."/>
            <person name="Bowyer P."/>
            <person name="Chen D."/>
            <person name="Collins M."/>
            <person name="Coulsen R."/>
            <person name="Davies R."/>
            <person name="Dyer P.S."/>
            <person name="Farman M.L."/>
            <person name="Fedorova N."/>
            <person name="Fedorova N.D."/>
            <person name="Feldblyum T.V."/>
            <person name="Fischer R."/>
            <person name="Fosker N."/>
            <person name="Fraser A."/>
            <person name="Garcia J.L."/>
            <person name="Garcia M.J."/>
            <person name="Goble A."/>
            <person name="Goldman G.H."/>
            <person name="Gomi K."/>
            <person name="Griffith-Jones S."/>
            <person name="Gwilliam R."/>
            <person name="Haas B.J."/>
            <person name="Haas H."/>
            <person name="Harris D.E."/>
            <person name="Horiuchi H."/>
            <person name="Huang J."/>
            <person name="Humphray S."/>
            <person name="Jimenez J."/>
            <person name="Keller N."/>
            <person name="Khouri H."/>
            <person name="Kitamoto K."/>
            <person name="Kobayashi T."/>
            <person name="Konzack S."/>
            <person name="Kulkarni R."/>
            <person name="Kumagai T."/>
            <person name="Lafton A."/>
            <person name="Latge J.-P."/>
            <person name="Li W."/>
            <person name="Lord A."/>
            <person name="Lu C."/>
            <person name="Majoros W.H."/>
            <person name="May G.S."/>
            <person name="Miller B.L."/>
            <person name="Mohamoud Y."/>
            <person name="Molina M."/>
            <person name="Monod M."/>
            <person name="Mouyna I."/>
            <person name="Mulligan S."/>
            <person name="Murphy L.D."/>
            <person name="O'Neil S."/>
            <person name="Paulsen I."/>
            <person name="Penalva M.A."/>
            <person name="Pertea M."/>
            <person name="Price C."/>
            <person name="Pritchard B.L."/>
            <person name="Quail M.A."/>
            <person name="Rabbinowitsch E."/>
            <person name="Rawlins N."/>
            <person name="Rajandream M.A."/>
            <person name="Reichard U."/>
            <person name="Renauld H."/>
            <person name="Robson G.D."/>
            <person name="Rodriguez de Cordoba S."/>
            <person name="Rodriguez-Pena J.M."/>
            <person name="Ronning C.M."/>
            <person name="Rutter S."/>
            <person name="Salzberg S.L."/>
            <person name="Sanchez M."/>
            <person name="Sanchez-Ferrero J.C."/>
            <person name="Saunders D."/>
            <person name="Seeger K."/>
            <person name="Squares R."/>
            <person name="Squares S."/>
            <person name="Takeuchi M."/>
            <person name="Tekaia F."/>
            <person name="Turner G."/>
            <person name="Vazquez de Aldana C.R."/>
            <person name="Weidman J."/>
            <person name="White O."/>
            <person name="Woodward J.R."/>
            <person name="Yu J.-H."/>
            <person name="Fraser C.M."/>
            <person name="Galagan J.E."/>
            <person name="Asai K."/>
            <person name="Machida M."/>
            <person name="Hall N."/>
            <person name="Barrell B.G."/>
            <person name="Denning D.W."/>
        </authorList>
    </citation>
    <scope>NUCLEOTIDE SEQUENCE [LARGE SCALE GENOMIC DNA]</scope>
    <source>
        <strain>ATCC MYA-4609 / CBS 101355 / FGSC A1100 / Af293</strain>
    </source>
</reference>
<reference key="3">
    <citation type="journal article" date="2006" name="Curr. Genet.">
        <title>Transcriptome analysis of Aspergillus fumigatus exposed to voriconazole.</title>
        <authorList>
            <person name="da Silva Ferreira M.E."/>
            <person name="Malavazi I."/>
            <person name="Savoldi M."/>
            <person name="Brakhage A.A."/>
            <person name="Goldman M.H."/>
            <person name="Kim H.S."/>
            <person name="Nierman W.C."/>
            <person name="Goldman G.H."/>
        </authorList>
    </citation>
    <scope>IDENTIFICATION</scope>
    <scope>INDUCTION</scope>
    <scope>FUNCTION</scope>
</reference>
<reference key="4">
    <citation type="journal article" date="2012" name="FEMS Microbiol. Lett.">
        <title>Identification of novel genes conferring altered azole susceptibility in Aspergillus fumigatus.</title>
        <authorList>
            <person name="Bowyer P."/>
            <person name="Mosquera J."/>
            <person name="Anderson M."/>
            <person name="Birch M."/>
            <person name="Bromley M."/>
            <person name="Denning D.W."/>
        </authorList>
    </citation>
    <scope>FUNCTION</scope>
    <scope>DISRUPTION PHENOTYPE</scope>
</reference>
<reference key="5">
    <citation type="journal article" date="2013" name="Eukaryot. Cell">
        <title>Contributions of Aspergillus fumigatus ATP-binding cassette transporter proteins to drug resistance and virulence.</title>
        <authorList>
            <person name="Paul S."/>
            <person name="Diekema D."/>
            <person name="Moye-Rowley W.S."/>
        </authorList>
    </citation>
    <scope>FUNCTION</scope>
    <scope>INDUCTION</scope>
    <scope>DISRUPTION PHENOTYPE</scope>
    <scope>SUBCELLULAR LOCATION</scope>
    <scope>CATALYTIC ACTIVITY</scope>
</reference>
<reference key="6">
    <citation type="journal article" date="2013" name="J. Antimicrob. Chemother.">
        <title>The cdr1B efflux transporter is associated with non-cyp51a-mediated itraconazole resistance in Aspergillus fumigatus.</title>
        <authorList>
            <person name="Fraczek M.G."/>
            <person name="Bromley M."/>
            <person name="Buied A."/>
            <person name="Moore C.B."/>
            <person name="Rajendran R."/>
            <person name="Rautemaa R."/>
            <person name="Ramage G."/>
            <person name="Denning D.W."/>
            <person name="Bowyer P."/>
        </authorList>
    </citation>
    <scope>FUNCTION</scope>
    <scope>DISRUPTION PHENOTYPE</scope>
    <scope>INDUCTION</scope>
</reference>
<reference key="7">
    <citation type="journal article" date="2017" name="Antimicrob. Agents Chemother.">
        <title>Contributions of both ATP-Binding Cassette Transporter and Cyp51A Proteins Are Essential for Azole Resistance in Aspergillus fumigatus.</title>
        <authorList>
            <person name="Paul S."/>
            <person name="Diekema D."/>
            <person name="Moye-Rowley W.S."/>
        </authorList>
    </citation>
    <scope>FUNCTION</scope>
    <scope>DISRUPTION PHENOTYPE</scope>
</reference>
<reference key="8">
    <citation type="journal article" date="2017" name="PLoS Pathog.">
        <title>A novel Zn2-Cys6 transcription factor atrR plays a key role in an azole resistance mechanism of Aspergillus fumigatus by co-regulating cyp51A and cdr1B Expressions.</title>
        <authorList>
            <person name="Hagiwara D."/>
            <person name="Miura D."/>
            <person name="Shimizu K."/>
            <person name="Paul S."/>
            <person name="Ohba A."/>
            <person name="Gonoi T."/>
            <person name="Watanabe A."/>
            <person name="Kamei K."/>
            <person name="Shintani T."/>
            <person name="Moye-Rowley W.S."/>
            <person name="Kawamoto S."/>
            <person name="Gomi K."/>
        </authorList>
    </citation>
    <scope>INDUCTION</scope>
</reference>
<reference key="9">
    <citation type="journal article" date="2020" name="MBio">
        <title>Characterization of the efflux capability and substrate specificity of Aspergillus fumigatus PDR5-like ABC transporters expressed in Saccharomyces cerevisiae.</title>
        <authorList>
            <person name="Esquivel B.D."/>
            <person name="Rybak J.M."/>
            <person name="Barker K.S."/>
            <person name="Fortwendel J.R."/>
            <person name="Rogers P.D."/>
            <person name="White T.C."/>
        </authorList>
    </citation>
    <scope>FUNCTION</scope>
    <scope>CATALYTIC ACTIVITY</scope>
    <scope>SUBSTRATE SPECIFICITY</scope>
    <scope>ACTIVITY REGULATION</scope>
    <scope>INDUCTION</scope>
</reference>
<gene>
    <name evidence="13" type="primary">abcC</name>
    <name evidence="15" type="synonym">abcB</name>
    <name evidence="16" type="synonym">abcG1</name>
    <name evidence="12" type="synonym">atrE</name>
    <name evidence="14" type="synonym">cdr1B</name>
    <name type="ORF">AFUA_1G14330</name>
</gene>
<organism>
    <name type="scientific">Aspergillus fumigatus (strain ATCC MYA-4609 / CBS 101355 / FGSC A1100 / Af293)</name>
    <name type="common">Neosartorya fumigata</name>
    <dbReference type="NCBI Taxonomy" id="330879"/>
    <lineage>
        <taxon>Eukaryota</taxon>
        <taxon>Fungi</taxon>
        <taxon>Dikarya</taxon>
        <taxon>Ascomycota</taxon>
        <taxon>Pezizomycotina</taxon>
        <taxon>Eurotiomycetes</taxon>
        <taxon>Eurotiomycetidae</taxon>
        <taxon>Eurotiales</taxon>
        <taxon>Aspergillaceae</taxon>
        <taxon>Aspergillus</taxon>
        <taxon>Aspergillus subgen. Fumigati</taxon>
    </lineage>
</organism>
<proteinExistence type="evidence at protein level"/>
<keyword id="KW-0067">ATP-binding</keyword>
<keyword id="KW-1003">Cell membrane</keyword>
<keyword id="KW-0325">Glycoprotein</keyword>
<keyword id="KW-0472">Membrane</keyword>
<keyword id="KW-0547">Nucleotide-binding</keyword>
<keyword id="KW-1185">Reference proteome</keyword>
<keyword id="KW-0677">Repeat</keyword>
<keyword id="KW-0812">Transmembrane</keyword>
<keyword id="KW-1133">Transmembrane helix</keyword>
<keyword id="KW-0813">Transport</keyword>
<dbReference type="EMBL" id="BX649607">
    <property type="protein sequence ID" value="CAF32148.1"/>
    <property type="molecule type" value="Genomic_DNA"/>
</dbReference>
<dbReference type="EMBL" id="AAHF01000004">
    <property type="protein sequence ID" value="EAL90765.1"/>
    <property type="molecule type" value="Genomic_DNA"/>
</dbReference>
<dbReference type="RefSeq" id="XP_752803.1">
    <property type="nucleotide sequence ID" value="XM_747710.1"/>
</dbReference>
<dbReference type="SMR" id="E9RBG1"/>
<dbReference type="FunCoup" id="E9RBG1">
    <property type="interactions" value="361"/>
</dbReference>
<dbReference type="STRING" id="330879.E9RBG1"/>
<dbReference type="GlyCosmos" id="E9RBG1">
    <property type="glycosylation" value="4 sites, No reported glycans"/>
</dbReference>
<dbReference type="EnsemblFungi" id="EAL90765">
    <property type="protein sequence ID" value="EAL90765"/>
    <property type="gene ID" value="AFUA_1G14330"/>
</dbReference>
<dbReference type="GeneID" id="3509814"/>
<dbReference type="KEGG" id="afm:AFUA_1G14330"/>
<dbReference type="VEuPathDB" id="FungiDB:Afu1g14330"/>
<dbReference type="eggNOG" id="KOG0065">
    <property type="taxonomic scope" value="Eukaryota"/>
</dbReference>
<dbReference type="HOGENOM" id="CLU_000604_35_0_1"/>
<dbReference type="InParanoid" id="E9RBG1"/>
<dbReference type="OMA" id="EMNGIYM"/>
<dbReference type="OrthoDB" id="245989at2759"/>
<dbReference type="PHI-base" id="PHI:4230"/>
<dbReference type="PHI-base" id="PHI:8901"/>
<dbReference type="Proteomes" id="UP000002530">
    <property type="component" value="Chromosome 1"/>
</dbReference>
<dbReference type="GO" id="GO:0005886">
    <property type="term" value="C:plasma membrane"/>
    <property type="evidence" value="ECO:0000314"/>
    <property type="project" value="AspGD"/>
</dbReference>
<dbReference type="GO" id="GO:0140359">
    <property type="term" value="F:ABC-type transporter activity"/>
    <property type="evidence" value="ECO:0007669"/>
    <property type="project" value="InterPro"/>
</dbReference>
<dbReference type="GO" id="GO:0005524">
    <property type="term" value="F:ATP binding"/>
    <property type="evidence" value="ECO:0007669"/>
    <property type="project" value="UniProtKB-KW"/>
</dbReference>
<dbReference type="GO" id="GO:0016887">
    <property type="term" value="F:ATP hydrolysis activity"/>
    <property type="evidence" value="ECO:0007669"/>
    <property type="project" value="InterPro"/>
</dbReference>
<dbReference type="GO" id="GO:1990961">
    <property type="term" value="P:xenobiotic detoxification by transmembrane export across the plasma membrane"/>
    <property type="evidence" value="ECO:0007669"/>
    <property type="project" value="InterPro"/>
</dbReference>
<dbReference type="CDD" id="cd03233">
    <property type="entry name" value="ABCG_PDR_domain1"/>
    <property type="match status" value="1"/>
</dbReference>
<dbReference type="CDD" id="cd03232">
    <property type="entry name" value="ABCG_PDR_domain2"/>
    <property type="match status" value="1"/>
</dbReference>
<dbReference type="FunFam" id="3.40.50.300:FF:000881">
    <property type="entry name" value="ABC multidrug transporter A-1"/>
    <property type="match status" value="1"/>
</dbReference>
<dbReference type="FunFam" id="3.40.50.300:FF:000054">
    <property type="entry name" value="ABC multidrug transporter atrF"/>
    <property type="match status" value="1"/>
</dbReference>
<dbReference type="Gene3D" id="3.40.50.300">
    <property type="entry name" value="P-loop containing nucleotide triphosphate hydrolases"/>
    <property type="match status" value="2"/>
</dbReference>
<dbReference type="InterPro" id="IPR003593">
    <property type="entry name" value="AAA+_ATPase"/>
</dbReference>
<dbReference type="InterPro" id="IPR013525">
    <property type="entry name" value="ABC2_TM"/>
</dbReference>
<dbReference type="InterPro" id="IPR029481">
    <property type="entry name" value="ABC_trans_N"/>
</dbReference>
<dbReference type="InterPro" id="IPR003439">
    <property type="entry name" value="ABC_transporter-like_ATP-bd"/>
</dbReference>
<dbReference type="InterPro" id="IPR017871">
    <property type="entry name" value="ABC_transporter-like_CS"/>
</dbReference>
<dbReference type="InterPro" id="IPR043926">
    <property type="entry name" value="ABCG_dom"/>
</dbReference>
<dbReference type="InterPro" id="IPR034001">
    <property type="entry name" value="ABCG_PDR_1"/>
</dbReference>
<dbReference type="InterPro" id="IPR034003">
    <property type="entry name" value="ABCG_PDR_2"/>
</dbReference>
<dbReference type="InterPro" id="IPR005285">
    <property type="entry name" value="Drug-R_PDR/CDR"/>
</dbReference>
<dbReference type="InterPro" id="IPR027417">
    <property type="entry name" value="P-loop_NTPase"/>
</dbReference>
<dbReference type="InterPro" id="IPR010929">
    <property type="entry name" value="PDR_CDR_ABC"/>
</dbReference>
<dbReference type="NCBIfam" id="TIGR00956">
    <property type="entry name" value="3a01205"/>
    <property type="match status" value="1"/>
</dbReference>
<dbReference type="PANTHER" id="PTHR19241">
    <property type="entry name" value="ATP-BINDING CASSETTE TRANSPORTER"/>
    <property type="match status" value="1"/>
</dbReference>
<dbReference type="Pfam" id="PF01061">
    <property type="entry name" value="ABC2_membrane"/>
    <property type="match status" value="2"/>
</dbReference>
<dbReference type="Pfam" id="PF19055">
    <property type="entry name" value="ABC2_membrane_7"/>
    <property type="match status" value="1"/>
</dbReference>
<dbReference type="Pfam" id="PF00005">
    <property type="entry name" value="ABC_tran"/>
    <property type="match status" value="2"/>
</dbReference>
<dbReference type="Pfam" id="PF14510">
    <property type="entry name" value="ABC_trans_N"/>
    <property type="match status" value="1"/>
</dbReference>
<dbReference type="Pfam" id="PF06422">
    <property type="entry name" value="PDR_CDR"/>
    <property type="match status" value="2"/>
</dbReference>
<dbReference type="SMART" id="SM00382">
    <property type="entry name" value="AAA"/>
    <property type="match status" value="2"/>
</dbReference>
<dbReference type="SUPFAM" id="SSF52540">
    <property type="entry name" value="P-loop containing nucleoside triphosphate hydrolases"/>
    <property type="match status" value="2"/>
</dbReference>
<dbReference type="PROSITE" id="PS00211">
    <property type="entry name" value="ABC_TRANSPORTER_1"/>
    <property type="match status" value="1"/>
</dbReference>
<dbReference type="PROSITE" id="PS50893">
    <property type="entry name" value="ABC_TRANSPORTER_2"/>
    <property type="match status" value="2"/>
</dbReference>
<accession>E9RBG1</accession>
<accession>Q4WS17</accession>
<accession>Q6MY55</accession>
<feature type="chain" id="PRO_0000445098" description="ABC multidrug transporter C">
    <location>
        <begin position="1"/>
        <end position="1497"/>
    </location>
</feature>
<feature type="transmembrane region" description="Helical" evidence="1">
    <location>
        <begin position="523"/>
        <end position="543"/>
    </location>
</feature>
<feature type="transmembrane region" description="Helical" evidence="1">
    <location>
        <begin position="557"/>
        <end position="577"/>
    </location>
</feature>
<feature type="transmembrane region" description="Helical" evidence="1">
    <location>
        <begin position="599"/>
        <end position="621"/>
    </location>
</feature>
<feature type="transmembrane region" description="Helical" evidence="1">
    <location>
        <begin position="632"/>
        <end position="652"/>
    </location>
</feature>
<feature type="transmembrane region" description="Helical" evidence="1">
    <location>
        <begin position="665"/>
        <end position="685"/>
    </location>
</feature>
<feature type="transmembrane region" description="Helical" evidence="1">
    <location>
        <begin position="777"/>
        <end position="797"/>
    </location>
</feature>
<feature type="transmembrane region" description="Helical" evidence="1">
    <location>
        <begin position="1192"/>
        <end position="1212"/>
    </location>
</feature>
<feature type="transmembrane region" description="Helical" evidence="1">
    <location>
        <begin position="1226"/>
        <end position="1246"/>
    </location>
</feature>
<feature type="transmembrane region" description="Helical" evidence="1">
    <location>
        <begin position="1273"/>
        <end position="1293"/>
    </location>
</feature>
<feature type="transmembrane region" description="Helical" evidence="1">
    <location>
        <begin position="1313"/>
        <end position="1333"/>
    </location>
</feature>
<feature type="transmembrane region" description="Helical" evidence="1">
    <location>
        <begin position="1352"/>
        <end position="1372"/>
    </location>
</feature>
<feature type="transmembrane region" description="Helical" evidence="1">
    <location>
        <begin position="1464"/>
        <end position="1484"/>
    </location>
</feature>
<feature type="domain" description="ABC transporter 1" evidence="2">
    <location>
        <begin position="158"/>
        <end position="412"/>
    </location>
</feature>
<feature type="domain" description="ABC transporter 2" evidence="2">
    <location>
        <begin position="853"/>
        <end position="1096"/>
    </location>
</feature>
<feature type="region of interest" description="Disordered" evidence="4">
    <location>
        <begin position="1"/>
        <end position="21"/>
    </location>
</feature>
<feature type="region of interest" description="Disordered" evidence="4">
    <location>
        <begin position="815"/>
        <end position="843"/>
    </location>
</feature>
<feature type="compositionally biased region" description="Polar residues" evidence="4">
    <location>
        <begin position="1"/>
        <end position="13"/>
    </location>
</feature>
<feature type="binding site" evidence="2">
    <location>
        <begin position="889"/>
        <end position="896"/>
    </location>
    <ligand>
        <name>ATP</name>
        <dbReference type="ChEBI" id="CHEBI:30616"/>
    </ligand>
</feature>
<feature type="glycosylation site" description="N-linked (GlcNAc...) asparagine" evidence="3">
    <location>
        <position position="137"/>
    </location>
</feature>
<feature type="glycosylation site" description="N-linked (GlcNAc...) asparagine" evidence="3">
    <location>
        <position position="336"/>
    </location>
</feature>
<feature type="glycosylation site" description="N-linked (GlcNAc...) asparagine" evidence="3">
    <location>
        <position position="762"/>
    </location>
</feature>
<feature type="glycosylation site" description="N-linked (GlcNAc...) asparagine" evidence="3">
    <location>
        <position position="1411"/>
    </location>
</feature>
<protein>
    <recommendedName>
        <fullName evidence="13">ABC multidrug transporter C</fullName>
    </recommendedName>
</protein>
<name>ABCC_ASPFU</name>
<evidence type="ECO:0000255" key="1"/>
<evidence type="ECO:0000255" key="2">
    <source>
        <dbReference type="PROSITE-ProRule" id="PRU00434"/>
    </source>
</evidence>
<evidence type="ECO:0000255" key="3">
    <source>
        <dbReference type="PROSITE-ProRule" id="PRU00498"/>
    </source>
</evidence>
<evidence type="ECO:0000256" key="4">
    <source>
        <dbReference type="SAM" id="MobiDB-lite"/>
    </source>
</evidence>
<evidence type="ECO:0000269" key="5">
    <source>
    </source>
</evidence>
<evidence type="ECO:0000269" key="6">
    <source>
    </source>
</evidence>
<evidence type="ECO:0000269" key="7">
    <source>
    </source>
</evidence>
<evidence type="ECO:0000269" key="8">
    <source>
    </source>
</evidence>
<evidence type="ECO:0000269" key="9">
    <source>
    </source>
</evidence>
<evidence type="ECO:0000269" key="10">
    <source>
    </source>
</evidence>
<evidence type="ECO:0000269" key="11">
    <source>
    </source>
</evidence>
<evidence type="ECO:0000303" key="12">
    <source>
    </source>
</evidence>
<evidence type="ECO:0000303" key="13">
    <source>
    </source>
</evidence>
<evidence type="ECO:0000303" key="14">
    <source>
    </source>
</evidence>
<evidence type="ECO:0000303" key="15">
    <source>
    </source>
</evidence>
<evidence type="ECO:0000303" key="16">
    <source>
    </source>
</evidence>
<evidence type="ECO:0000305" key="17"/>
<evidence type="ECO:0000305" key="18">
    <source>
    </source>
</evidence>